<reference key="1">
    <citation type="journal article" date="2003" name="Nature">
        <title>The DNA sequence and analysis of human chromosome 6.</title>
        <authorList>
            <person name="Mungall A.J."/>
            <person name="Palmer S.A."/>
            <person name="Sims S.K."/>
            <person name="Edwards C.A."/>
            <person name="Ashurst J.L."/>
            <person name="Wilming L."/>
            <person name="Jones M.C."/>
            <person name="Horton R."/>
            <person name="Hunt S.E."/>
            <person name="Scott C.E."/>
            <person name="Gilbert J.G.R."/>
            <person name="Clamp M.E."/>
            <person name="Bethel G."/>
            <person name="Milne S."/>
            <person name="Ainscough R."/>
            <person name="Almeida J.P."/>
            <person name="Ambrose K.D."/>
            <person name="Andrews T.D."/>
            <person name="Ashwell R.I.S."/>
            <person name="Babbage A.K."/>
            <person name="Bagguley C.L."/>
            <person name="Bailey J."/>
            <person name="Banerjee R."/>
            <person name="Barker D.J."/>
            <person name="Barlow K.F."/>
            <person name="Bates K."/>
            <person name="Beare D.M."/>
            <person name="Beasley H."/>
            <person name="Beasley O."/>
            <person name="Bird C.P."/>
            <person name="Blakey S.E."/>
            <person name="Bray-Allen S."/>
            <person name="Brook J."/>
            <person name="Brown A.J."/>
            <person name="Brown J.Y."/>
            <person name="Burford D.C."/>
            <person name="Burrill W."/>
            <person name="Burton J."/>
            <person name="Carder C."/>
            <person name="Carter N.P."/>
            <person name="Chapman J.C."/>
            <person name="Clark S.Y."/>
            <person name="Clark G."/>
            <person name="Clee C.M."/>
            <person name="Clegg S."/>
            <person name="Cobley V."/>
            <person name="Collier R.E."/>
            <person name="Collins J.E."/>
            <person name="Colman L.K."/>
            <person name="Corby N.R."/>
            <person name="Coville G.J."/>
            <person name="Culley K.M."/>
            <person name="Dhami P."/>
            <person name="Davies J."/>
            <person name="Dunn M."/>
            <person name="Earthrowl M.E."/>
            <person name="Ellington A.E."/>
            <person name="Evans K.A."/>
            <person name="Faulkner L."/>
            <person name="Francis M.D."/>
            <person name="Frankish A."/>
            <person name="Frankland J."/>
            <person name="French L."/>
            <person name="Garner P."/>
            <person name="Garnett J."/>
            <person name="Ghori M.J."/>
            <person name="Gilby L.M."/>
            <person name="Gillson C.J."/>
            <person name="Glithero R.J."/>
            <person name="Grafham D.V."/>
            <person name="Grant M."/>
            <person name="Gribble S."/>
            <person name="Griffiths C."/>
            <person name="Griffiths M.N.D."/>
            <person name="Hall R."/>
            <person name="Halls K.S."/>
            <person name="Hammond S."/>
            <person name="Harley J.L."/>
            <person name="Hart E.A."/>
            <person name="Heath P.D."/>
            <person name="Heathcott R."/>
            <person name="Holmes S.J."/>
            <person name="Howden P.J."/>
            <person name="Howe K.L."/>
            <person name="Howell G.R."/>
            <person name="Huckle E."/>
            <person name="Humphray S.J."/>
            <person name="Humphries M.D."/>
            <person name="Hunt A.R."/>
            <person name="Johnson C.M."/>
            <person name="Joy A.A."/>
            <person name="Kay M."/>
            <person name="Keenan S.J."/>
            <person name="Kimberley A.M."/>
            <person name="King A."/>
            <person name="Laird G.K."/>
            <person name="Langford C."/>
            <person name="Lawlor S."/>
            <person name="Leongamornlert D.A."/>
            <person name="Leversha M."/>
            <person name="Lloyd C.R."/>
            <person name="Lloyd D.M."/>
            <person name="Loveland J.E."/>
            <person name="Lovell J."/>
            <person name="Martin S."/>
            <person name="Mashreghi-Mohammadi M."/>
            <person name="Maslen G.L."/>
            <person name="Matthews L."/>
            <person name="McCann O.T."/>
            <person name="McLaren S.J."/>
            <person name="McLay K."/>
            <person name="McMurray A."/>
            <person name="Moore M.J.F."/>
            <person name="Mullikin J.C."/>
            <person name="Niblett D."/>
            <person name="Nickerson T."/>
            <person name="Novik K.L."/>
            <person name="Oliver K."/>
            <person name="Overton-Larty E.K."/>
            <person name="Parker A."/>
            <person name="Patel R."/>
            <person name="Pearce A.V."/>
            <person name="Peck A.I."/>
            <person name="Phillimore B.J.C.T."/>
            <person name="Phillips S."/>
            <person name="Plumb R.W."/>
            <person name="Porter K.M."/>
            <person name="Ramsey Y."/>
            <person name="Ranby S.A."/>
            <person name="Rice C.M."/>
            <person name="Ross M.T."/>
            <person name="Searle S.M."/>
            <person name="Sehra H.K."/>
            <person name="Sheridan E."/>
            <person name="Skuce C.D."/>
            <person name="Smith S."/>
            <person name="Smith M."/>
            <person name="Spraggon L."/>
            <person name="Squares S.L."/>
            <person name="Steward C.A."/>
            <person name="Sycamore N."/>
            <person name="Tamlyn-Hall G."/>
            <person name="Tester J."/>
            <person name="Theaker A.J."/>
            <person name="Thomas D.W."/>
            <person name="Thorpe A."/>
            <person name="Tracey A."/>
            <person name="Tromans A."/>
            <person name="Tubby B."/>
            <person name="Wall M."/>
            <person name="Wallis J.M."/>
            <person name="West A.P."/>
            <person name="White S.S."/>
            <person name="Whitehead S.L."/>
            <person name="Whittaker H."/>
            <person name="Wild A."/>
            <person name="Willey D.J."/>
            <person name="Wilmer T.E."/>
            <person name="Wood J.M."/>
            <person name="Wray P.W."/>
            <person name="Wyatt J.C."/>
            <person name="Young L."/>
            <person name="Younger R.M."/>
            <person name="Bentley D.R."/>
            <person name="Coulson A."/>
            <person name="Durbin R.M."/>
            <person name="Hubbard T."/>
            <person name="Sulston J.E."/>
            <person name="Dunham I."/>
            <person name="Rogers J."/>
            <person name="Beck S."/>
        </authorList>
    </citation>
    <scope>NUCLEOTIDE SEQUENCE [LARGE SCALE GENOMIC DNA]</scope>
</reference>
<reference key="2">
    <citation type="journal article" date="2004" name="Genome Res.">
        <title>The status, quality, and expansion of the NIH full-length cDNA project: the Mammalian Gene Collection (MGC).</title>
        <authorList>
            <consortium name="The MGC Project Team"/>
        </authorList>
    </citation>
    <scope>NUCLEOTIDE SEQUENCE [LARGE SCALE MRNA]</scope>
    <source>
        <tissue>Bone marrow</tissue>
    </source>
</reference>
<dbReference type="EMBL" id="AL136139">
    <property type="status" value="NOT_ANNOTATED_CDS"/>
    <property type="molecule type" value="Genomic_DNA"/>
</dbReference>
<dbReference type="EMBL" id="BC032356">
    <property type="status" value="NOT_ANNOTATED_CDS"/>
    <property type="molecule type" value="mRNA"/>
</dbReference>
<dbReference type="CCDS" id="CCDS56396.1"/>
<dbReference type="RefSeq" id="NP_001129047.1">
    <property type="nucleotide sequence ID" value="NM_001135575.2"/>
</dbReference>
<dbReference type="SMR" id="P0DJ93"/>
<dbReference type="BioGRID" id="128747">
    <property type="interactions" value="2"/>
</dbReference>
<dbReference type="FunCoup" id="P0DJ93">
    <property type="interactions" value="242"/>
</dbReference>
<dbReference type="STRING" id="9606.ENSP00000451866"/>
<dbReference type="iPTMnet" id="P0DJ93"/>
<dbReference type="PhosphoSitePlus" id="P0DJ93"/>
<dbReference type="SwissPalm" id="P0DJ93"/>
<dbReference type="BioMuta" id="SMIM13"/>
<dbReference type="DMDM" id="363579843"/>
<dbReference type="jPOST" id="P0DJ93"/>
<dbReference type="MassIVE" id="P0DJ93"/>
<dbReference type="PaxDb" id="9606-ENSP00000451866"/>
<dbReference type="PeptideAtlas" id="P0DJ93"/>
<dbReference type="ProteomicsDB" id="52537"/>
<dbReference type="Pumba" id="P0DJ93"/>
<dbReference type="TopDownProteomics" id="P0DJ93"/>
<dbReference type="Antibodypedia" id="74351">
    <property type="antibodies" value="5 antibodies from 5 providers"/>
</dbReference>
<dbReference type="DNASU" id="221710"/>
<dbReference type="Ensembl" id="ENST00000376935.4">
    <property type="protein sequence ID" value="ENSP00000452219.1"/>
    <property type="gene ID" value="ENSG00000224531.7"/>
</dbReference>
<dbReference type="Ensembl" id="ENST00000416247.4">
    <property type="protein sequence ID" value="ENSP00000451866.1"/>
    <property type="gene ID" value="ENSG00000224531.7"/>
</dbReference>
<dbReference type="GeneID" id="221710"/>
<dbReference type="KEGG" id="hsa:221710"/>
<dbReference type="MANE-Select" id="ENST00000416247.4">
    <property type="protein sequence ID" value="ENSP00000451866.1"/>
    <property type="RefSeq nucleotide sequence ID" value="NM_001135575.2"/>
    <property type="RefSeq protein sequence ID" value="NP_001129047.1"/>
</dbReference>
<dbReference type="UCSC" id="uc011dio.3">
    <property type="organism name" value="human"/>
</dbReference>
<dbReference type="AGR" id="HGNC:27356"/>
<dbReference type="CTD" id="221710"/>
<dbReference type="GeneCards" id="SMIM13"/>
<dbReference type="HGNC" id="HGNC:27356">
    <property type="gene designation" value="SMIM13"/>
</dbReference>
<dbReference type="HPA" id="ENSG00000224531">
    <property type="expression patterns" value="Tissue enhanced (brain)"/>
</dbReference>
<dbReference type="neXtProt" id="NX_P0DJ93"/>
<dbReference type="OpenTargets" id="ENSG00000224531"/>
<dbReference type="VEuPathDB" id="HostDB:ENSG00000224531"/>
<dbReference type="eggNOG" id="ENOG502S5IU">
    <property type="taxonomic scope" value="Eukaryota"/>
</dbReference>
<dbReference type="GeneTree" id="ENSGT00560000078630"/>
<dbReference type="HOGENOM" id="CLU_190096_0_0_1"/>
<dbReference type="InParanoid" id="P0DJ93"/>
<dbReference type="OMA" id="ACVLLFM"/>
<dbReference type="OrthoDB" id="25586at2759"/>
<dbReference type="PAN-GO" id="P0DJ93">
    <property type="GO annotations" value="0 GO annotations based on evolutionary models"/>
</dbReference>
<dbReference type="PhylomeDB" id="P0DJ93"/>
<dbReference type="PathwayCommons" id="P0DJ93"/>
<dbReference type="BioGRID-ORCS" id="221710">
    <property type="hits" value="13 hits in 1145 CRISPR screens"/>
</dbReference>
<dbReference type="GenomeRNAi" id="221710"/>
<dbReference type="Pharos" id="P0DJ93">
    <property type="development level" value="Tdark"/>
</dbReference>
<dbReference type="PRO" id="PR:P0DJ93"/>
<dbReference type="Proteomes" id="UP000005640">
    <property type="component" value="Chromosome 6"/>
</dbReference>
<dbReference type="RNAct" id="P0DJ93">
    <property type="molecule type" value="protein"/>
</dbReference>
<dbReference type="Bgee" id="ENSG00000224531">
    <property type="expression patterns" value="Expressed in cerebellar vermis and 191 other cell types or tissues"/>
</dbReference>
<dbReference type="GO" id="GO:0016020">
    <property type="term" value="C:membrane"/>
    <property type="evidence" value="ECO:0007669"/>
    <property type="project" value="UniProtKB-SubCell"/>
</dbReference>
<dbReference type="InterPro" id="IPR031851">
    <property type="entry name" value="DUF4750"/>
</dbReference>
<dbReference type="PANTHER" id="PTHR36877">
    <property type="entry name" value="SMALL INTEGRAL MEMBRANE PROTEIN 13"/>
    <property type="match status" value="1"/>
</dbReference>
<dbReference type="PANTHER" id="PTHR36877:SF1">
    <property type="entry name" value="SMALL INTEGRAL MEMBRANE PROTEIN 13"/>
    <property type="match status" value="1"/>
</dbReference>
<dbReference type="Pfam" id="PF15938">
    <property type="entry name" value="DUF4750"/>
    <property type="match status" value="1"/>
</dbReference>
<feature type="chain" id="PRO_0000414060" description="Small integral membrane protein 13">
    <location>
        <begin position="1"/>
        <end position="91"/>
    </location>
</feature>
<feature type="transmembrane region" description="Helical" evidence="2">
    <location>
        <begin position="10"/>
        <end position="30"/>
    </location>
</feature>
<feature type="region of interest" description="Disordered" evidence="3">
    <location>
        <begin position="47"/>
        <end position="91"/>
    </location>
</feature>
<feature type="compositionally biased region" description="Basic residues" evidence="3">
    <location>
        <begin position="71"/>
        <end position="80"/>
    </location>
</feature>
<feature type="compositionally biased region" description="Basic and acidic residues" evidence="3">
    <location>
        <begin position="81"/>
        <end position="91"/>
    </location>
</feature>
<feature type="modified residue" description="Phosphoserine" evidence="1">
    <location>
        <position position="58"/>
    </location>
</feature>
<feature type="modified residue" description="Phosphoserine" evidence="1">
    <location>
        <position position="60"/>
    </location>
</feature>
<feature type="modified residue" description="Phosphothreonine" evidence="1">
    <location>
        <position position="62"/>
    </location>
</feature>
<feature type="modified residue" description="Phosphoserine" evidence="1">
    <location>
        <position position="69"/>
    </location>
</feature>
<gene>
    <name type="primary">SMIM13</name>
    <name type="synonym">C6orf228</name>
</gene>
<accession>P0DJ93</accession>
<accession>G3V581</accession>
<comment type="subcellular location">
    <subcellularLocation>
        <location evidence="4">Membrane</location>
        <topology evidence="4">Single-pass membrane protein</topology>
    </subcellularLocation>
</comment>
<comment type="similarity">
    <text evidence="4">Belongs to the SMIM13 family.</text>
</comment>
<name>SIM13_HUMAN</name>
<organism>
    <name type="scientific">Homo sapiens</name>
    <name type="common">Human</name>
    <dbReference type="NCBI Taxonomy" id="9606"/>
    <lineage>
        <taxon>Eukaryota</taxon>
        <taxon>Metazoa</taxon>
        <taxon>Chordata</taxon>
        <taxon>Craniata</taxon>
        <taxon>Vertebrata</taxon>
        <taxon>Euteleostomi</taxon>
        <taxon>Mammalia</taxon>
        <taxon>Eutheria</taxon>
        <taxon>Euarchontoglires</taxon>
        <taxon>Primates</taxon>
        <taxon>Haplorrhini</taxon>
        <taxon>Catarrhini</taxon>
        <taxon>Hominidae</taxon>
        <taxon>Homo</taxon>
    </lineage>
</organism>
<keyword id="KW-0472">Membrane</keyword>
<keyword id="KW-0597">Phosphoprotein</keyword>
<keyword id="KW-1267">Proteomics identification</keyword>
<keyword id="KW-1185">Reference proteome</keyword>
<keyword id="KW-0812">Transmembrane</keyword>
<keyword id="KW-1133">Transmembrane helix</keyword>
<evidence type="ECO:0000250" key="1">
    <source>
        <dbReference type="UniProtKB" id="E9Q942"/>
    </source>
</evidence>
<evidence type="ECO:0000255" key="2"/>
<evidence type="ECO:0000256" key="3">
    <source>
        <dbReference type="SAM" id="MobiDB-lite"/>
    </source>
</evidence>
<evidence type="ECO:0000305" key="4"/>
<protein>
    <recommendedName>
        <fullName>Small integral membrane protein 13</fullName>
    </recommendedName>
</protein>
<sequence length="91" mass="10351">MWHSVGLTLLVFVATLLIVLLLMVCGWYFVWHLFLSKFKFLRELVGDTGSQEGDHEPSGSETEEDTSSSPHRIRSARQRRAPADEGHRPLT</sequence>
<proteinExistence type="evidence at protein level"/>